<feature type="chain" id="PRO_0000173779" description="Formimidoylglutamase">
    <location>
        <begin position="1"/>
        <end position="336"/>
    </location>
</feature>
<feature type="region of interest" description="Disordered" evidence="2">
    <location>
        <begin position="1"/>
        <end position="22"/>
    </location>
</feature>
<feature type="compositionally biased region" description="Polar residues" evidence="2">
    <location>
        <begin position="1"/>
        <end position="10"/>
    </location>
</feature>
<feature type="compositionally biased region" description="Basic and acidic residues" evidence="2">
    <location>
        <begin position="11"/>
        <end position="22"/>
    </location>
</feature>
<feature type="binding site" evidence="1">
    <location>
        <position position="127"/>
    </location>
    <ligand>
        <name>Mn(2+)</name>
        <dbReference type="ChEBI" id="CHEBI:29035"/>
        <label>1</label>
    </ligand>
</feature>
<feature type="binding site" evidence="1">
    <location>
        <position position="157"/>
    </location>
    <ligand>
        <name>Mn(2+)</name>
        <dbReference type="ChEBI" id="CHEBI:29035"/>
        <label>1</label>
    </ligand>
</feature>
<feature type="binding site" evidence="1">
    <location>
        <position position="157"/>
    </location>
    <ligand>
        <name>Mn(2+)</name>
        <dbReference type="ChEBI" id="CHEBI:29035"/>
        <label>2</label>
    </ligand>
</feature>
<feature type="binding site" evidence="1">
    <location>
        <position position="159"/>
    </location>
    <ligand>
        <name>Mn(2+)</name>
        <dbReference type="ChEBI" id="CHEBI:29035"/>
        <label>2</label>
    </ligand>
</feature>
<feature type="binding site" evidence="1">
    <location>
        <position position="161"/>
    </location>
    <ligand>
        <name>Mn(2+)</name>
        <dbReference type="ChEBI" id="CHEBI:29035"/>
        <label>1</label>
    </ligand>
</feature>
<feature type="binding site" evidence="1">
    <location>
        <position position="254"/>
    </location>
    <ligand>
        <name>Mn(2+)</name>
        <dbReference type="ChEBI" id="CHEBI:29035"/>
        <label>1</label>
    </ligand>
</feature>
<feature type="binding site" evidence="1">
    <location>
        <position position="254"/>
    </location>
    <ligand>
        <name>Mn(2+)</name>
        <dbReference type="ChEBI" id="CHEBI:29035"/>
        <label>2</label>
    </ligand>
</feature>
<feature type="binding site" evidence="1">
    <location>
        <position position="256"/>
    </location>
    <ligand>
        <name>Mn(2+)</name>
        <dbReference type="ChEBI" id="CHEBI:29035"/>
        <label>2</label>
    </ligand>
</feature>
<feature type="helix" evidence="3">
    <location>
        <begin position="17"/>
        <end position="22"/>
    </location>
</feature>
<feature type="helix" evidence="3">
    <location>
        <begin position="26"/>
        <end position="29"/>
    </location>
</feature>
<feature type="strand" evidence="3">
    <location>
        <begin position="30"/>
        <end position="32"/>
    </location>
</feature>
<feature type="helix" evidence="3">
    <location>
        <begin position="35"/>
        <end position="40"/>
    </location>
</feature>
<feature type="strand" evidence="3">
    <location>
        <begin position="45"/>
        <end position="51"/>
    </location>
</feature>
<feature type="helix" evidence="3">
    <location>
        <begin position="54"/>
        <end position="58"/>
    </location>
</feature>
<feature type="helix" evidence="3">
    <location>
        <begin position="65"/>
        <end position="67"/>
    </location>
</feature>
<feature type="helix" evidence="3">
    <location>
        <begin position="68"/>
        <end position="77"/>
    </location>
</feature>
<feature type="strand" evidence="3">
    <location>
        <begin position="87"/>
        <end position="94"/>
    </location>
</feature>
<feature type="helix" evidence="3">
    <location>
        <begin position="100"/>
        <end position="114"/>
    </location>
</feature>
<feature type="turn" evidence="3">
    <location>
        <begin position="115"/>
        <end position="117"/>
    </location>
</feature>
<feature type="strand" evidence="3">
    <location>
        <begin position="120"/>
        <end position="126"/>
    </location>
</feature>
<feature type="helix" evidence="3">
    <location>
        <begin position="129"/>
        <end position="143"/>
    </location>
</feature>
<feature type="strand" evidence="3">
    <location>
        <begin position="151"/>
        <end position="156"/>
    </location>
</feature>
<feature type="strand" evidence="3">
    <location>
        <begin position="168"/>
        <end position="170"/>
    </location>
</feature>
<feature type="helix" evidence="3">
    <location>
        <begin position="179"/>
        <end position="190"/>
    </location>
</feature>
<feature type="strand" evidence="3">
    <location>
        <begin position="195"/>
        <end position="201"/>
    </location>
</feature>
<feature type="turn" evidence="3">
    <location>
        <begin position="203"/>
        <end position="205"/>
    </location>
</feature>
<feature type="helix" evidence="3">
    <location>
        <begin position="208"/>
        <end position="216"/>
    </location>
</feature>
<feature type="strand" evidence="3">
    <location>
        <begin position="220"/>
        <end position="223"/>
    </location>
</feature>
<feature type="helix" evidence="3">
    <location>
        <begin position="224"/>
        <end position="226"/>
    </location>
</feature>
<feature type="turn" evidence="3">
    <location>
        <begin position="229"/>
        <end position="231"/>
    </location>
</feature>
<feature type="helix" evidence="3">
    <location>
        <begin position="232"/>
        <end position="244"/>
    </location>
</feature>
<feature type="strand" evidence="3">
    <location>
        <begin position="247"/>
        <end position="254"/>
    </location>
</feature>
<feature type="helix" evidence="3">
    <location>
        <begin position="255"/>
        <end position="257"/>
    </location>
</feature>
<feature type="turn" evidence="3">
    <location>
        <begin position="260"/>
        <end position="262"/>
    </location>
</feature>
<feature type="strand" evidence="3">
    <location>
        <begin position="265"/>
        <end position="268"/>
    </location>
</feature>
<feature type="strand" evidence="3">
    <location>
        <begin position="270"/>
        <end position="272"/>
    </location>
</feature>
<feature type="helix" evidence="3">
    <location>
        <begin position="276"/>
        <end position="288"/>
    </location>
</feature>
<feature type="turn" evidence="3">
    <location>
        <begin position="290"/>
        <end position="292"/>
    </location>
</feature>
<feature type="strand" evidence="3">
    <location>
        <begin position="293"/>
        <end position="299"/>
    </location>
</feature>
<feature type="helix" evidence="3">
    <location>
        <begin position="303"/>
        <end position="305"/>
    </location>
</feature>
<feature type="helix" evidence="3">
    <location>
        <begin position="310"/>
        <end position="332"/>
    </location>
</feature>
<reference key="1">
    <citation type="journal article" date="2000" name="Nature">
        <title>DNA sequence of both chromosomes of the cholera pathogen Vibrio cholerae.</title>
        <authorList>
            <person name="Heidelberg J.F."/>
            <person name="Eisen J.A."/>
            <person name="Nelson W.C."/>
            <person name="Clayton R.A."/>
            <person name="Gwinn M.L."/>
            <person name="Dodson R.J."/>
            <person name="Haft D.H."/>
            <person name="Hickey E.K."/>
            <person name="Peterson J.D."/>
            <person name="Umayam L.A."/>
            <person name="Gill S.R."/>
            <person name="Nelson K.E."/>
            <person name="Read T.D."/>
            <person name="Tettelin H."/>
            <person name="Richardson D.L."/>
            <person name="Ermolaeva M.D."/>
            <person name="Vamathevan J.J."/>
            <person name="Bass S."/>
            <person name="Qin H."/>
            <person name="Dragoi I."/>
            <person name="Sellers P."/>
            <person name="McDonald L.A."/>
            <person name="Utterback T.R."/>
            <person name="Fleischmann R.D."/>
            <person name="Nierman W.C."/>
            <person name="White O."/>
            <person name="Salzberg S.L."/>
            <person name="Smith H.O."/>
            <person name="Colwell R.R."/>
            <person name="Mekalanos J.J."/>
            <person name="Venter J.C."/>
            <person name="Fraser C.M."/>
        </authorList>
    </citation>
    <scope>NUCLEOTIDE SEQUENCE [LARGE SCALE GENOMIC DNA]</scope>
    <source>
        <strain>ATCC 39315 / El Tor Inaba N16961</strain>
    </source>
</reference>
<gene>
    <name evidence="1" type="primary">hutG</name>
    <name type="ordered locus">VC_1204</name>
</gene>
<keyword id="KW-0002">3D-structure</keyword>
<keyword id="KW-0369">Histidine metabolism</keyword>
<keyword id="KW-0378">Hydrolase</keyword>
<keyword id="KW-0464">Manganese</keyword>
<keyword id="KW-0479">Metal-binding</keyword>
<keyword id="KW-1185">Reference proteome</keyword>
<comment type="function">
    <text evidence="1">Catalyzes the conversion of N-formimidoyl-L-glutamate to L-glutamate and formamide.</text>
</comment>
<comment type="catalytic activity">
    <reaction evidence="1">
        <text>N-formimidoyl-L-glutamate + H2O = formamide + L-glutamate</text>
        <dbReference type="Rhea" id="RHEA:22492"/>
        <dbReference type="ChEBI" id="CHEBI:15377"/>
        <dbReference type="ChEBI" id="CHEBI:16397"/>
        <dbReference type="ChEBI" id="CHEBI:29985"/>
        <dbReference type="ChEBI" id="CHEBI:58928"/>
        <dbReference type="EC" id="3.5.3.8"/>
    </reaction>
</comment>
<comment type="cofactor">
    <cofactor evidence="1">
        <name>Mn(2+)</name>
        <dbReference type="ChEBI" id="CHEBI:29035"/>
    </cofactor>
    <text evidence="1">Binds 2 manganese ions per subunit.</text>
</comment>
<comment type="pathway">
    <text evidence="1">Amino-acid degradation; L-histidine degradation into L-glutamate; L-glutamate from N-formimidoyl-L-glutamate (hydrolase route): step 1/1.</text>
</comment>
<comment type="similarity">
    <text evidence="1">Belongs to the arginase family.</text>
</comment>
<sequence length="336" mass="37329">MNPNFTTEHTWQGRHDPEDGQAGRRVHHIACPIQVGELANQEPGVALIGFECDAGVERNKGRTGAKHAPSLIKQALANLAWHHPIPIYDLGNIRCEGDELEQAQQECAQVIQQALPHARAIVLGGGHEIAWATFQGLAQHFLATGVKQPRIGIINFDAHFDLRTFESELAPVRPSSGTPFNQIHHFCQQQGWDFHYACLGVSRASNTPALFERADKLGVWYVEDKAFSPLSLKDHLTQLQHFIDDCDYLYLTIDLDVFPAASAPGVSAPAARGVSLEALAPYFDRILHYKNKLMIADIAEYNPSFDIDQHTARLAARLCWDIANAMAEQVQSIRHP</sequence>
<organism>
    <name type="scientific">Vibrio cholerae serotype O1 (strain ATCC 39315 / El Tor Inaba N16961)</name>
    <dbReference type="NCBI Taxonomy" id="243277"/>
    <lineage>
        <taxon>Bacteria</taxon>
        <taxon>Pseudomonadati</taxon>
        <taxon>Pseudomonadota</taxon>
        <taxon>Gammaproteobacteria</taxon>
        <taxon>Vibrionales</taxon>
        <taxon>Vibrionaceae</taxon>
        <taxon>Vibrio</taxon>
    </lineage>
</organism>
<evidence type="ECO:0000255" key="1">
    <source>
        <dbReference type="HAMAP-Rule" id="MF_00737"/>
    </source>
</evidence>
<evidence type="ECO:0000256" key="2">
    <source>
        <dbReference type="SAM" id="MobiDB-lite"/>
    </source>
</evidence>
<evidence type="ECO:0007829" key="3">
    <source>
        <dbReference type="PDB" id="1XFK"/>
    </source>
</evidence>
<name>HUTG_VIBCH</name>
<dbReference type="EC" id="3.5.3.8" evidence="1"/>
<dbReference type="EMBL" id="AE003852">
    <property type="protein sequence ID" value="AAF94363.1"/>
    <property type="molecule type" value="Genomic_DNA"/>
</dbReference>
<dbReference type="PIR" id="G82228">
    <property type="entry name" value="G82228"/>
</dbReference>
<dbReference type="RefSeq" id="NP_230849.1">
    <property type="nucleotide sequence ID" value="NC_002505.1"/>
</dbReference>
<dbReference type="RefSeq" id="WP_001069038.1">
    <property type="nucleotide sequence ID" value="NZ_LT906614.1"/>
</dbReference>
<dbReference type="PDB" id="1XFK">
    <property type="method" value="X-ray"/>
    <property type="resolution" value="1.80 A"/>
    <property type="chains" value="A=1-336"/>
</dbReference>
<dbReference type="PDBsum" id="1XFK"/>
<dbReference type="SMR" id="Q9KSQ2"/>
<dbReference type="STRING" id="243277.VC_1204"/>
<dbReference type="DNASU" id="2614637"/>
<dbReference type="EnsemblBacteria" id="AAF94363">
    <property type="protein sequence ID" value="AAF94363"/>
    <property type="gene ID" value="VC_1204"/>
</dbReference>
<dbReference type="KEGG" id="vch:VC_1204"/>
<dbReference type="PATRIC" id="fig|243277.26.peg.1151"/>
<dbReference type="eggNOG" id="COG0010">
    <property type="taxonomic scope" value="Bacteria"/>
</dbReference>
<dbReference type="HOGENOM" id="CLU_039478_2_0_6"/>
<dbReference type="BRENDA" id="3.5.3.8">
    <property type="organism ID" value="6626"/>
</dbReference>
<dbReference type="UniPathway" id="UPA00379">
    <property type="reaction ID" value="UER00552"/>
</dbReference>
<dbReference type="EvolutionaryTrace" id="Q9KSQ2"/>
<dbReference type="Proteomes" id="UP000000584">
    <property type="component" value="Chromosome 1"/>
</dbReference>
<dbReference type="GO" id="GO:0008783">
    <property type="term" value="F:agmatinase activity"/>
    <property type="evidence" value="ECO:0000318"/>
    <property type="project" value="GO_Central"/>
</dbReference>
<dbReference type="GO" id="GO:0050415">
    <property type="term" value="F:formimidoylglutamase activity"/>
    <property type="evidence" value="ECO:0007669"/>
    <property type="project" value="UniProtKB-UniRule"/>
</dbReference>
<dbReference type="GO" id="GO:0030145">
    <property type="term" value="F:manganese ion binding"/>
    <property type="evidence" value="ECO:0007669"/>
    <property type="project" value="UniProtKB-UniRule"/>
</dbReference>
<dbReference type="GO" id="GO:0019556">
    <property type="term" value="P:L-histidine catabolic process to glutamate and formamide"/>
    <property type="evidence" value="ECO:0007669"/>
    <property type="project" value="UniProtKB-UniPathway"/>
</dbReference>
<dbReference type="GO" id="GO:0019557">
    <property type="term" value="P:L-histidine catabolic process to glutamate and formate"/>
    <property type="evidence" value="ECO:0007669"/>
    <property type="project" value="UniProtKB-UniPathway"/>
</dbReference>
<dbReference type="GO" id="GO:0033389">
    <property type="term" value="P:putrescine biosynthetic process from arginine, via agmatine"/>
    <property type="evidence" value="ECO:0000318"/>
    <property type="project" value="GO_Central"/>
</dbReference>
<dbReference type="CDD" id="cd09015">
    <property type="entry name" value="Ureohydrolase"/>
    <property type="match status" value="1"/>
</dbReference>
<dbReference type="FunFam" id="3.40.800.10:FF:000010">
    <property type="entry name" value="Formimidoylglutamase"/>
    <property type="match status" value="1"/>
</dbReference>
<dbReference type="Gene3D" id="3.40.800.10">
    <property type="entry name" value="Ureohydrolase domain"/>
    <property type="match status" value="1"/>
</dbReference>
<dbReference type="HAMAP" id="MF_00737">
    <property type="entry name" value="Formimidoylglutam"/>
    <property type="match status" value="1"/>
</dbReference>
<dbReference type="InterPro" id="IPR005923">
    <property type="entry name" value="HutG"/>
</dbReference>
<dbReference type="InterPro" id="IPR006035">
    <property type="entry name" value="Ureohydrolase"/>
</dbReference>
<dbReference type="InterPro" id="IPR023696">
    <property type="entry name" value="Ureohydrolase_dom_sf"/>
</dbReference>
<dbReference type="InterPro" id="IPR020855">
    <property type="entry name" value="Ureohydrolase_Mn_BS"/>
</dbReference>
<dbReference type="NCBIfam" id="TIGR01227">
    <property type="entry name" value="hutG"/>
    <property type="match status" value="1"/>
</dbReference>
<dbReference type="PANTHER" id="PTHR11358">
    <property type="entry name" value="ARGINASE/AGMATINASE"/>
    <property type="match status" value="1"/>
</dbReference>
<dbReference type="PANTHER" id="PTHR11358:SF35">
    <property type="entry name" value="FORMIMIDOYLGLUTAMASE"/>
    <property type="match status" value="1"/>
</dbReference>
<dbReference type="Pfam" id="PF00491">
    <property type="entry name" value="Arginase"/>
    <property type="match status" value="1"/>
</dbReference>
<dbReference type="PIRSF" id="PIRSF036979">
    <property type="entry name" value="Arginase"/>
    <property type="match status" value="1"/>
</dbReference>
<dbReference type="PRINTS" id="PR00116">
    <property type="entry name" value="ARGINASE"/>
</dbReference>
<dbReference type="SUPFAM" id="SSF52768">
    <property type="entry name" value="Arginase/deacetylase"/>
    <property type="match status" value="1"/>
</dbReference>
<dbReference type="PROSITE" id="PS01053">
    <property type="entry name" value="ARGINASE_1"/>
    <property type="match status" value="1"/>
</dbReference>
<dbReference type="PROSITE" id="PS51409">
    <property type="entry name" value="ARGINASE_2"/>
    <property type="match status" value="1"/>
</dbReference>
<protein>
    <recommendedName>
        <fullName evidence="1">Formimidoylglutamase</fullName>
        <ecNumber evidence="1">3.5.3.8</ecNumber>
    </recommendedName>
    <alternativeName>
        <fullName evidence="1">Formiminoglutamase</fullName>
    </alternativeName>
    <alternativeName>
        <fullName evidence="1">Formiminoglutamate hydrolase</fullName>
    </alternativeName>
</protein>
<accession>Q9KSQ2</accession>
<proteinExistence type="evidence at protein level"/>